<comment type="function">
    <text evidence="1">Plays a role in the transport of cargos that are too large to fit into COPII-coated vesicles and require specific mechanisms to be incorporated into membrane-bound carriers and exported from the endoplasmic reticulum. This protein is required for collagen VII (COL7A1) secretion by loading COL7A1 into transport carriers. It may participate in cargo loading of COL7A1 at endoplasmic reticulum exit sites by binding to COPII coat subunits Sec23/24 and guiding SH3-bound COL7A1 into a growing carrier. Does not play a role in global protein secretion and is apparently specific to COL7A1 cargo loading. However, it may participate in secretion of other proteins in cells that do not secrete COL7A1. It is also specifically required for the secretion of lipoproteins by participating in their export from the endoplasmic reticulum. Required for correct assembly of COPII coat components at endoplasmic reticulum exit sites (ERES) and for the localization of SEC16A and membrane-bound ER-resident complexes consisting of MIA2 and PREB/SEC12 to ERES.</text>
</comment>
<comment type="subunit">
    <text evidence="1">Interacts with MIA2. Interacts (via SH3 domain) with COL7A1. Interacts with the COPII coat subunits SEC23A, SEC23B and maybe SEC24C. May interact with APOB and MIA2. Interacts with SEC16A.</text>
</comment>
<comment type="subcellular location">
    <subcellularLocation>
        <location evidence="1">Endoplasmic reticulum membrane</location>
        <topology evidence="1">Single-pass membrane protein</topology>
    </subcellularLocation>
    <text evidence="1">Localizes at endoplasmic reticulum exit sites (ERES), also known as transitional endoplasmic reticulum (tER). SEC16A is required for its proper localization to ERES. After loading of COL7A1 into transport carriers, it is not incorporated into COPII carriers and remains in the endoplasmic reticulum membrane.</text>
</comment>
<comment type="alternative products">
    <event type="alternative splicing"/>
    <isoform>
        <id>Q8BI84-1</id>
        <name>1</name>
        <sequence type="displayed"/>
    </isoform>
    <isoform>
        <id>Q8BI84-2</id>
        <name>2</name>
        <sequence type="described" ref="VSP_025867 VSP_025868"/>
    </isoform>
    <isoform>
        <id>Q8BI84-3</id>
        <name>3</name>
        <sequence type="described" ref="VSP_025865 VSP_025866"/>
    </isoform>
</comment>
<comment type="developmental stage">
    <text evidence="5">Ubiquitously expressed during embryogenesis, starting at 8 dpc.</text>
</comment>
<comment type="domain">
    <text evidence="1">The proline-rich domain (PRD) contains repeated PPP motifs. A single PPP motif is necessary and sufficient to mediate interaction with the COPII coat subunits SEC23A and SEC23B.</text>
</comment>
<comment type="domain">
    <text evidence="1">Although 2 transmembrane domains are predicted, it only contains one transmembrane domain. The other predicted transmembrane region is probably a hairpin-type region embedded into the membrane, which does not cross the membrane. It is unclear which of the 2 predicted transmembrane regions is the transmembrane or the hairpin-type region.</text>
</comment>
<comment type="similarity">
    <text evidence="8">Belongs to the MIA/OTOR family. Tango1 subfamily.</text>
</comment>
<reference key="1">
    <citation type="journal article" date="2005" name="Science">
        <title>The transcriptional landscape of the mammalian genome.</title>
        <authorList>
            <person name="Carninci P."/>
            <person name="Kasukawa T."/>
            <person name="Katayama S."/>
            <person name="Gough J."/>
            <person name="Frith M.C."/>
            <person name="Maeda N."/>
            <person name="Oyama R."/>
            <person name="Ravasi T."/>
            <person name="Lenhard B."/>
            <person name="Wells C."/>
            <person name="Kodzius R."/>
            <person name="Shimokawa K."/>
            <person name="Bajic V.B."/>
            <person name="Brenner S.E."/>
            <person name="Batalov S."/>
            <person name="Forrest A.R."/>
            <person name="Zavolan M."/>
            <person name="Davis M.J."/>
            <person name="Wilming L.G."/>
            <person name="Aidinis V."/>
            <person name="Allen J.E."/>
            <person name="Ambesi-Impiombato A."/>
            <person name="Apweiler R."/>
            <person name="Aturaliya R.N."/>
            <person name="Bailey T.L."/>
            <person name="Bansal M."/>
            <person name="Baxter L."/>
            <person name="Beisel K.W."/>
            <person name="Bersano T."/>
            <person name="Bono H."/>
            <person name="Chalk A.M."/>
            <person name="Chiu K.P."/>
            <person name="Choudhary V."/>
            <person name="Christoffels A."/>
            <person name="Clutterbuck D.R."/>
            <person name="Crowe M.L."/>
            <person name="Dalla E."/>
            <person name="Dalrymple B.P."/>
            <person name="de Bono B."/>
            <person name="Della Gatta G."/>
            <person name="di Bernardo D."/>
            <person name="Down T."/>
            <person name="Engstrom P."/>
            <person name="Fagiolini M."/>
            <person name="Faulkner G."/>
            <person name="Fletcher C.F."/>
            <person name="Fukushima T."/>
            <person name="Furuno M."/>
            <person name="Futaki S."/>
            <person name="Gariboldi M."/>
            <person name="Georgii-Hemming P."/>
            <person name="Gingeras T.R."/>
            <person name="Gojobori T."/>
            <person name="Green R.E."/>
            <person name="Gustincich S."/>
            <person name="Harbers M."/>
            <person name="Hayashi Y."/>
            <person name="Hensch T.K."/>
            <person name="Hirokawa N."/>
            <person name="Hill D."/>
            <person name="Huminiecki L."/>
            <person name="Iacono M."/>
            <person name="Ikeo K."/>
            <person name="Iwama A."/>
            <person name="Ishikawa T."/>
            <person name="Jakt M."/>
            <person name="Kanapin A."/>
            <person name="Katoh M."/>
            <person name="Kawasawa Y."/>
            <person name="Kelso J."/>
            <person name="Kitamura H."/>
            <person name="Kitano H."/>
            <person name="Kollias G."/>
            <person name="Krishnan S.P."/>
            <person name="Kruger A."/>
            <person name="Kummerfeld S.K."/>
            <person name="Kurochkin I.V."/>
            <person name="Lareau L.F."/>
            <person name="Lazarevic D."/>
            <person name="Lipovich L."/>
            <person name="Liu J."/>
            <person name="Liuni S."/>
            <person name="McWilliam S."/>
            <person name="Madan Babu M."/>
            <person name="Madera M."/>
            <person name="Marchionni L."/>
            <person name="Matsuda H."/>
            <person name="Matsuzawa S."/>
            <person name="Miki H."/>
            <person name="Mignone F."/>
            <person name="Miyake S."/>
            <person name="Morris K."/>
            <person name="Mottagui-Tabar S."/>
            <person name="Mulder N."/>
            <person name="Nakano N."/>
            <person name="Nakauchi H."/>
            <person name="Ng P."/>
            <person name="Nilsson R."/>
            <person name="Nishiguchi S."/>
            <person name="Nishikawa S."/>
            <person name="Nori F."/>
            <person name="Ohara O."/>
            <person name="Okazaki Y."/>
            <person name="Orlando V."/>
            <person name="Pang K.C."/>
            <person name="Pavan W.J."/>
            <person name="Pavesi G."/>
            <person name="Pesole G."/>
            <person name="Petrovsky N."/>
            <person name="Piazza S."/>
            <person name="Reed J."/>
            <person name="Reid J.F."/>
            <person name="Ring B.Z."/>
            <person name="Ringwald M."/>
            <person name="Rost B."/>
            <person name="Ruan Y."/>
            <person name="Salzberg S.L."/>
            <person name="Sandelin A."/>
            <person name="Schneider C."/>
            <person name="Schoenbach C."/>
            <person name="Sekiguchi K."/>
            <person name="Semple C.A."/>
            <person name="Seno S."/>
            <person name="Sessa L."/>
            <person name="Sheng Y."/>
            <person name="Shibata Y."/>
            <person name="Shimada H."/>
            <person name="Shimada K."/>
            <person name="Silva D."/>
            <person name="Sinclair B."/>
            <person name="Sperling S."/>
            <person name="Stupka E."/>
            <person name="Sugiura K."/>
            <person name="Sultana R."/>
            <person name="Takenaka Y."/>
            <person name="Taki K."/>
            <person name="Tammoja K."/>
            <person name="Tan S.L."/>
            <person name="Tang S."/>
            <person name="Taylor M.S."/>
            <person name="Tegner J."/>
            <person name="Teichmann S.A."/>
            <person name="Ueda H.R."/>
            <person name="van Nimwegen E."/>
            <person name="Verardo R."/>
            <person name="Wei C.L."/>
            <person name="Yagi K."/>
            <person name="Yamanishi H."/>
            <person name="Zabarovsky E."/>
            <person name="Zhu S."/>
            <person name="Zimmer A."/>
            <person name="Hide W."/>
            <person name="Bult C."/>
            <person name="Grimmond S.M."/>
            <person name="Teasdale R.D."/>
            <person name="Liu E.T."/>
            <person name="Brusic V."/>
            <person name="Quackenbush J."/>
            <person name="Wahlestedt C."/>
            <person name="Mattick J.S."/>
            <person name="Hume D.A."/>
            <person name="Kai C."/>
            <person name="Sasaki D."/>
            <person name="Tomaru Y."/>
            <person name="Fukuda S."/>
            <person name="Kanamori-Katayama M."/>
            <person name="Suzuki M."/>
            <person name="Aoki J."/>
            <person name="Arakawa T."/>
            <person name="Iida J."/>
            <person name="Imamura K."/>
            <person name="Itoh M."/>
            <person name="Kato T."/>
            <person name="Kawaji H."/>
            <person name="Kawagashira N."/>
            <person name="Kawashima T."/>
            <person name="Kojima M."/>
            <person name="Kondo S."/>
            <person name="Konno H."/>
            <person name="Nakano K."/>
            <person name="Ninomiya N."/>
            <person name="Nishio T."/>
            <person name="Okada M."/>
            <person name="Plessy C."/>
            <person name="Shibata K."/>
            <person name="Shiraki T."/>
            <person name="Suzuki S."/>
            <person name="Tagami M."/>
            <person name="Waki K."/>
            <person name="Watahiki A."/>
            <person name="Okamura-Oho Y."/>
            <person name="Suzuki H."/>
            <person name="Kawai J."/>
            <person name="Hayashizaki Y."/>
        </authorList>
    </citation>
    <scope>NUCLEOTIDE SEQUENCE [LARGE SCALE MRNA] (ISOFORM 2)</scope>
    <scope>NUCLEOTIDE SEQUENCE [LARGE SCALE MRNA] OF 1-1382 (ISOFORM 3)</scope>
    <scope>NUCLEOTIDE SEQUENCE [LARGE SCALE MRNA] OF 1726-1930 (ISOFORM 1)</scope>
    <source>
        <strain>C57BL/6J</strain>
        <tissue>Cecum</tissue>
        <tissue>Corpora quadrigemina</tissue>
        <tissue>Fetal eye</tissue>
        <tissue>Pancreas</tissue>
        <tissue>Retina</tissue>
    </source>
</reference>
<reference key="2">
    <citation type="journal article" date="2009" name="PLoS Biol.">
        <title>Lineage-specific biology revealed by a finished genome assembly of the mouse.</title>
        <authorList>
            <person name="Church D.M."/>
            <person name="Goodstadt L."/>
            <person name="Hillier L.W."/>
            <person name="Zody M.C."/>
            <person name="Goldstein S."/>
            <person name="She X."/>
            <person name="Bult C.J."/>
            <person name="Agarwala R."/>
            <person name="Cherry J.L."/>
            <person name="DiCuccio M."/>
            <person name="Hlavina W."/>
            <person name="Kapustin Y."/>
            <person name="Meric P."/>
            <person name="Maglott D."/>
            <person name="Birtle Z."/>
            <person name="Marques A.C."/>
            <person name="Graves T."/>
            <person name="Zhou S."/>
            <person name="Teague B."/>
            <person name="Potamousis K."/>
            <person name="Churas C."/>
            <person name="Place M."/>
            <person name="Herschleb J."/>
            <person name="Runnheim R."/>
            <person name="Forrest D."/>
            <person name="Amos-Landgraf J."/>
            <person name="Schwartz D.C."/>
            <person name="Cheng Z."/>
            <person name="Lindblad-Toh K."/>
            <person name="Eichler E.E."/>
            <person name="Ponting C.P."/>
        </authorList>
    </citation>
    <scope>NUCLEOTIDE SEQUENCE [LARGE SCALE GENOMIC DNA]</scope>
    <source>
        <strain>C57BL/6J</strain>
    </source>
</reference>
<reference key="3">
    <citation type="submission" date="2005-02" db="EMBL/GenBank/DDBJ databases">
        <title>Prediction of the coding sequences of mouse homologues of KIAA gene. The complete nucleotide sequences of mouse KIAA-homologous cDNAs identified by screening of terminal sequences of cDNA clones randomly sampled from size-fractionated libraries.</title>
        <authorList>
            <person name="Okazaki N."/>
            <person name="Kikuno R.F."/>
            <person name="Ohara R."/>
            <person name="Inamoto S."/>
            <person name="Nagase T."/>
            <person name="Ohara O."/>
            <person name="Koga H."/>
        </authorList>
    </citation>
    <scope>NUCLEOTIDE SEQUENCE [LARGE SCALE MRNA] OF 1467-1930</scope>
    <source>
        <tissue>Pancreatic islet</tissue>
    </source>
</reference>
<reference key="4">
    <citation type="journal article" date="2004" name="Genome Res.">
        <title>The status, quality, and expansion of the NIH full-length cDNA project: the Mammalian Gene Collection (MGC).</title>
        <authorList>
            <consortium name="The MGC Project Team"/>
        </authorList>
    </citation>
    <scope>NUCLEOTIDE SEQUENCE [LARGE SCALE MRNA] OF 1469-1930</scope>
    <source>
        <tissue>Brain</tissue>
    </source>
</reference>
<reference key="5">
    <citation type="journal article" date="2004" name="Gene Expr. Patterns">
        <title>Characterization and expression pattern of the novel MIA homolog TANGO.</title>
        <authorList>
            <person name="Bosserhoff A.K."/>
            <person name="Moser M."/>
            <person name="Buettner R."/>
        </authorList>
    </citation>
    <scope>IDENTIFICATION</scope>
    <scope>DEVELOPMENTAL STAGE</scope>
</reference>
<reference key="6">
    <citation type="journal article" date="2007" name="Proc. Natl. Acad. Sci. U.S.A.">
        <title>Large-scale phosphorylation analysis of mouse liver.</title>
        <authorList>
            <person name="Villen J."/>
            <person name="Beausoleil S.A."/>
            <person name="Gerber S.A."/>
            <person name="Gygi S.P."/>
        </authorList>
    </citation>
    <scope>PHOSPHORYLATION [LARGE SCALE ANALYSIS] AT SER-1754 AND SER-1915</scope>
    <scope>IDENTIFICATION BY MASS SPECTROMETRY [LARGE SCALE ANALYSIS]</scope>
    <source>
        <tissue>Liver</tissue>
    </source>
</reference>
<reference key="7">
    <citation type="journal article" date="2009" name="Immunity">
        <title>The phagosomal proteome in interferon-gamma-activated macrophages.</title>
        <authorList>
            <person name="Trost M."/>
            <person name="English L."/>
            <person name="Lemieux S."/>
            <person name="Courcelles M."/>
            <person name="Desjardins M."/>
            <person name="Thibault P."/>
        </authorList>
    </citation>
    <scope>PHOSPHORYLATION [LARGE SCALE ANALYSIS] AT SER-1766</scope>
    <scope>IDENTIFICATION BY MASS SPECTROMETRY [LARGE SCALE ANALYSIS]</scope>
</reference>
<reference key="8">
    <citation type="journal article" date="2009" name="Mol. Cell. Proteomics">
        <title>Large scale localization of protein phosphorylation by use of electron capture dissociation mass spectrometry.</title>
        <authorList>
            <person name="Sweet S.M."/>
            <person name="Bailey C.M."/>
            <person name="Cunningham D.L."/>
            <person name="Heath J.K."/>
            <person name="Cooper H.J."/>
        </authorList>
    </citation>
    <scope>PHOSPHORYLATION [LARGE SCALE ANALYSIS] AT SER-1915</scope>
    <scope>IDENTIFICATION BY MASS SPECTROMETRY [LARGE SCALE ANALYSIS]</scope>
    <source>
        <tissue>Embryonic fibroblast</tissue>
    </source>
</reference>
<reference key="9">
    <citation type="journal article" date="2010" name="Cell">
        <title>A tissue-specific atlas of mouse protein phosphorylation and expression.</title>
        <authorList>
            <person name="Huttlin E.L."/>
            <person name="Jedrychowski M.P."/>
            <person name="Elias J.E."/>
            <person name="Goswami T."/>
            <person name="Rad R."/>
            <person name="Beausoleil S.A."/>
            <person name="Villen J."/>
            <person name="Haas W."/>
            <person name="Sowa M.E."/>
            <person name="Gygi S.P."/>
        </authorList>
    </citation>
    <scope>PHOSPHORYLATION [LARGE SCALE ANALYSIS] AT SER-1458; SER-1693; SER-1705; SER-1754 AND SER-1766</scope>
    <scope>IDENTIFICATION BY MASS SPECTROMETRY [LARGE SCALE ANALYSIS]</scope>
    <source>
        <tissue>Brain</tissue>
        <tissue>Brown adipose tissue</tissue>
        <tissue>Heart</tissue>
        <tissue>Kidney</tissue>
        <tissue>Liver</tissue>
        <tissue>Lung</tissue>
        <tissue>Pancreas</tissue>
        <tissue>Spleen</tissue>
        <tissue>Testis</tissue>
    </source>
</reference>
<reference key="10">
    <citation type="journal article" date="2014" name="Mol. Cell. Proteomics">
        <title>Immunoaffinity enrichment and mass spectrometry analysis of protein methylation.</title>
        <authorList>
            <person name="Guo A."/>
            <person name="Gu H."/>
            <person name="Zhou J."/>
            <person name="Mulhern D."/>
            <person name="Wang Y."/>
            <person name="Lee K.A."/>
            <person name="Yang V."/>
            <person name="Aguiar M."/>
            <person name="Kornhauser J."/>
            <person name="Jia X."/>
            <person name="Ren J."/>
            <person name="Beausoleil S.A."/>
            <person name="Silva J.C."/>
            <person name="Vemulapalli V."/>
            <person name="Bedford M.T."/>
            <person name="Comb M.J."/>
        </authorList>
    </citation>
    <scope>METHYLATION [LARGE SCALE ANALYSIS] AT ARG-1805</scope>
    <scope>IDENTIFICATION BY MASS SPECTROMETRY [LARGE SCALE ANALYSIS]</scope>
    <source>
        <tissue>Embryo</tissue>
    </source>
</reference>
<protein>
    <recommendedName>
        <fullName evidence="8">Transport and Golgi organization protein 1 homolog</fullName>
        <shortName evidence="8">TANGO1</shortName>
    </recommendedName>
    <alternativeName>
        <fullName evidence="10">Melanoma inhibitory activity protein 3</fullName>
    </alternativeName>
</protein>
<keyword id="KW-0025">Alternative splicing</keyword>
<keyword id="KW-0175">Coiled coil</keyword>
<keyword id="KW-0256">Endoplasmic reticulum</keyword>
<keyword id="KW-0931">ER-Golgi transport</keyword>
<keyword id="KW-0268">Exocytosis</keyword>
<keyword id="KW-0325">Glycoprotein</keyword>
<keyword id="KW-0472">Membrane</keyword>
<keyword id="KW-0488">Methylation</keyword>
<keyword id="KW-0597">Phosphoprotein</keyword>
<keyword id="KW-0653">Protein transport</keyword>
<keyword id="KW-1185">Reference proteome</keyword>
<keyword id="KW-0728">SH3 domain</keyword>
<keyword id="KW-0732">Signal</keyword>
<keyword id="KW-0812">Transmembrane</keyword>
<keyword id="KW-1133">Transmembrane helix</keyword>
<keyword id="KW-0813">Transport</keyword>
<dbReference type="EMBL" id="AK044749">
    <property type="protein sequence ID" value="BAC32064.1"/>
    <property type="molecule type" value="mRNA"/>
</dbReference>
<dbReference type="EMBL" id="AK046506">
    <property type="protein sequence ID" value="BAC32759.1"/>
    <property type="molecule type" value="mRNA"/>
</dbReference>
<dbReference type="EMBL" id="AK078951">
    <property type="protein sequence ID" value="BAC37474.1"/>
    <property type="molecule type" value="mRNA"/>
</dbReference>
<dbReference type="EMBL" id="AK084344">
    <property type="protein sequence ID" value="BAC39164.1"/>
    <property type="molecule type" value="mRNA"/>
</dbReference>
<dbReference type="EMBL" id="AK148470">
    <property type="protein sequence ID" value="BAE28571.1"/>
    <property type="status" value="ALT_TERM"/>
    <property type="molecule type" value="mRNA"/>
</dbReference>
<dbReference type="EMBL" id="CAAA01083517">
    <property type="status" value="NOT_ANNOTATED_CDS"/>
    <property type="molecule type" value="Genomic_DNA"/>
</dbReference>
<dbReference type="EMBL" id="AK220252">
    <property type="protein sequence ID" value="BAD90177.1"/>
    <property type="molecule type" value="mRNA"/>
</dbReference>
<dbReference type="EMBL" id="BC125472">
    <property type="protein sequence ID" value="AAI25473.1"/>
    <property type="molecule type" value="mRNA"/>
</dbReference>
<dbReference type="RefSeq" id="NP_796363.2">
    <property type="nucleotide sequence ID" value="NM_177389.3"/>
</dbReference>
<dbReference type="SMR" id="Q8BI84"/>
<dbReference type="BioGRID" id="237218">
    <property type="interactions" value="5"/>
</dbReference>
<dbReference type="FunCoup" id="Q8BI84">
    <property type="interactions" value="2691"/>
</dbReference>
<dbReference type="IntAct" id="Q8BI84">
    <property type="interactions" value="2"/>
</dbReference>
<dbReference type="MINT" id="Q8BI84"/>
<dbReference type="STRING" id="10090.ENSMUSP00000141268"/>
<dbReference type="TCDB" id="9.B.113.1.1">
    <property type="family name" value="the collagen secretory protein, mia3 (mia3) family"/>
</dbReference>
<dbReference type="GlyConnect" id="2505">
    <property type="glycosylation" value="4 N-Linked glycans (2 sites)"/>
</dbReference>
<dbReference type="GlyCosmos" id="Q8BI84">
    <property type="glycosylation" value="3 sites, 4 glycans"/>
</dbReference>
<dbReference type="GlyGen" id="Q8BI84">
    <property type="glycosylation" value="10 sites, 7 N-linked glycans (3 sites), 1 O-linked glycan (5 sites)"/>
</dbReference>
<dbReference type="iPTMnet" id="Q8BI84"/>
<dbReference type="PhosphoSitePlus" id="Q8BI84"/>
<dbReference type="SwissPalm" id="Q8BI84"/>
<dbReference type="jPOST" id="Q8BI84"/>
<dbReference type="PaxDb" id="10090-ENSMUSP00000064801"/>
<dbReference type="PeptideAtlas" id="Q8BI84"/>
<dbReference type="ProteomicsDB" id="259376">
    <molecule id="Q8BI84-1"/>
</dbReference>
<dbReference type="ProteomicsDB" id="259377">
    <molecule id="Q8BI84-2"/>
</dbReference>
<dbReference type="ProteomicsDB" id="259378">
    <molecule id="Q8BI84-3"/>
</dbReference>
<dbReference type="Pumba" id="Q8BI84"/>
<dbReference type="DNASU" id="338366"/>
<dbReference type="GeneID" id="338366"/>
<dbReference type="KEGG" id="mmu:338366"/>
<dbReference type="UCSC" id="uc008icw.1">
    <molecule id="Q8BI84-1"/>
    <property type="organism name" value="mouse"/>
</dbReference>
<dbReference type="AGR" id="MGI:2443183"/>
<dbReference type="CTD" id="375056"/>
<dbReference type="MGI" id="MGI:2443183">
    <property type="gene designation" value="Mia3"/>
</dbReference>
<dbReference type="eggNOG" id="ENOG502QS87">
    <property type="taxonomic scope" value="Eukaryota"/>
</dbReference>
<dbReference type="InParanoid" id="Q8BI84"/>
<dbReference type="PhylomeDB" id="Q8BI84"/>
<dbReference type="Reactome" id="R-MMU-381426">
    <property type="pathway name" value="Regulation of Insulin-like Growth Factor (IGF) transport and uptake by Insulin-like Growth Factor Binding Proteins (IGFBPs)"/>
</dbReference>
<dbReference type="Reactome" id="R-MMU-5694530">
    <property type="pathway name" value="Cargo concentration in the ER"/>
</dbReference>
<dbReference type="Reactome" id="R-MMU-8957275">
    <property type="pathway name" value="Post-translational protein phosphorylation"/>
</dbReference>
<dbReference type="BioGRID-ORCS" id="338366">
    <property type="hits" value="0 hits in 22 CRISPR screens"/>
</dbReference>
<dbReference type="ChiTaRS" id="Mia3">
    <property type="organism name" value="mouse"/>
</dbReference>
<dbReference type="PRO" id="PR:Q8BI84"/>
<dbReference type="Proteomes" id="UP000000589">
    <property type="component" value="Unplaced"/>
</dbReference>
<dbReference type="RNAct" id="Q8BI84">
    <property type="molecule type" value="protein"/>
</dbReference>
<dbReference type="GO" id="GO:0070971">
    <property type="term" value="C:endoplasmic reticulum exit site"/>
    <property type="evidence" value="ECO:0000250"/>
    <property type="project" value="UniProtKB"/>
</dbReference>
<dbReference type="GO" id="GO:0005789">
    <property type="term" value="C:endoplasmic reticulum membrane"/>
    <property type="evidence" value="ECO:0000314"/>
    <property type="project" value="MGI"/>
</dbReference>
<dbReference type="GO" id="GO:0016020">
    <property type="term" value="C:membrane"/>
    <property type="evidence" value="ECO:0000250"/>
    <property type="project" value="UniProtKB"/>
</dbReference>
<dbReference type="GO" id="GO:0038024">
    <property type="term" value="F:cargo receptor activity"/>
    <property type="evidence" value="ECO:0000250"/>
    <property type="project" value="UniProtKB"/>
</dbReference>
<dbReference type="GO" id="GO:0002063">
    <property type="term" value="P:chondrocyte development"/>
    <property type="evidence" value="ECO:0000315"/>
    <property type="project" value="MGI"/>
</dbReference>
<dbReference type="GO" id="GO:0030199">
    <property type="term" value="P:collagen fibril organization"/>
    <property type="evidence" value="ECO:0000315"/>
    <property type="project" value="MGI"/>
</dbReference>
<dbReference type="GO" id="GO:0090110">
    <property type="term" value="P:COPII-coated vesicle cargo loading"/>
    <property type="evidence" value="ECO:0000250"/>
    <property type="project" value="UniProtKB"/>
</dbReference>
<dbReference type="GO" id="GO:0007029">
    <property type="term" value="P:endoplasmic reticulum organization"/>
    <property type="evidence" value="ECO:0000250"/>
    <property type="project" value="UniProtKB"/>
</dbReference>
<dbReference type="GO" id="GO:0006888">
    <property type="term" value="P:endoplasmic reticulum to Golgi vesicle-mediated transport"/>
    <property type="evidence" value="ECO:0000250"/>
    <property type="project" value="UniProtKB"/>
</dbReference>
<dbReference type="GO" id="GO:0006887">
    <property type="term" value="P:exocytosis"/>
    <property type="evidence" value="ECO:0000250"/>
    <property type="project" value="UniProtKB"/>
</dbReference>
<dbReference type="GO" id="GO:0042953">
    <property type="term" value="P:lipoprotein transport"/>
    <property type="evidence" value="ECO:0000250"/>
    <property type="project" value="UniProtKB"/>
</dbReference>
<dbReference type="GO" id="GO:0030501">
    <property type="term" value="P:positive regulation of bone mineralization"/>
    <property type="evidence" value="ECO:0000315"/>
    <property type="project" value="MGI"/>
</dbReference>
<dbReference type="GO" id="GO:0070973">
    <property type="term" value="P:protein localization to endoplasmic reticulum exit site"/>
    <property type="evidence" value="ECO:0000250"/>
    <property type="project" value="UniProtKB"/>
</dbReference>
<dbReference type="GO" id="GO:0015031">
    <property type="term" value="P:protein transport"/>
    <property type="evidence" value="ECO:0000250"/>
    <property type="project" value="UniProtKB"/>
</dbReference>
<dbReference type="FunFam" id="2.30.30.40:FF:000162">
    <property type="entry name" value="MIA SH3 domain ER export factor 3"/>
    <property type="match status" value="1"/>
</dbReference>
<dbReference type="Gene3D" id="2.30.30.40">
    <property type="entry name" value="SH3 Domains"/>
    <property type="match status" value="1"/>
</dbReference>
<dbReference type="InterPro" id="IPR051500">
    <property type="entry name" value="cTAGE_MIA/OTOR"/>
</dbReference>
<dbReference type="InterPro" id="IPR036028">
    <property type="entry name" value="SH3-like_dom_sf"/>
</dbReference>
<dbReference type="InterPro" id="IPR001452">
    <property type="entry name" value="SH3_domain"/>
</dbReference>
<dbReference type="PANTHER" id="PTHR23158">
    <property type="entry name" value="MELANOMA INHIBITORY ACTIVITY-RELATED"/>
    <property type="match status" value="1"/>
</dbReference>
<dbReference type="PANTHER" id="PTHR23158:SF54">
    <property type="entry name" value="TRANSPORT AND GOLGI ORGANIZATION PROTEIN 1 HOMOLOG"/>
    <property type="match status" value="1"/>
</dbReference>
<dbReference type="Pfam" id="PF07653">
    <property type="entry name" value="SH3_2"/>
    <property type="match status" value="1"/>
</dbReference>
<dbReference type="SUPFAM" id="SSF50044">
    <property type="entry name" value="SH3-domain"/>
    <property type="match status" value="1"/>
</dbReference>
<dbReference type="PROSITE" id="PS50002">
    <property type="entry name" value="SH3"/>
    <property type="match status" value="1"/>
</dbReference>
<feature type="signal peptide" evidence="2">
    <location>
        <begin position="1"/>
        <end position="24"/>
    </location>
</feature>
<feature type="chain" id="PRO_0000288999" description="Transport and Golgi organization protein 1 homolog">
    <location>
        <begin position="25"/>
        <end position="1930"/>
    </location>
</feature>
<feature type="topological domain" description="Lumenal" evidence="2">
    <location>
        <begin position="25"/>
        <end position="1171"/>
    </location>
</feature>
<feature type="intramembrane region" evidence="2">
    <location>
        <begin position="1172"/>
        <end position="1192"/>
    </location>
</feature>
<feature type="topological domain" description="Lumenal" evidence="2">
    <location>
        <begin position="1193"/>
        <end position="1202"/>
    </location>
</feature>
<feature type="transmembrane region" description="Helical" evidence="2">
    <location>
        <begin position="1203"/>
        <end position="1223"/>
    </location>
</feature>
<feature type="topological domain" description="Cytoplasmic" evidence="2">
    <location>
        <begin position="1224"/>
        <end position="1930"/>
    </location>
</feature>
<feature type="domain" description="SH3" evidence="3">
    <location>
        <begin position="45"/>
        <end position="107"/>
    </location>
</feature>
<feature type="region of interest" description="Disordered" evidence="4">
    <location>
        <begin position="144"/>
        <end position="263"/>
    </location>
</feature>
<feature type="region of interest" description="Disordered" evidence="4">
    <location>
        <begin position="317"/>
        <end position="496"/>
    </location>
</feature>
<feature type="region of interest" description="Disordered" evidence="4">
    <location>
        <begin position="547"/>
        <end position="737"/>
    </location>
</feature>
<feature type="region of interest" description="Disordered" evidence="4">
    <location>
        <begin position="754"/>
        <end position="891"/>
    </location>
</feature>
<feature type="region of interest" description="Disordered" evidence="4">
    <location>
        <begin position="1018"/>
        <end position="1149"/>
    </location>
</feature>
<feature type="region of interest" description="Mediates interaction with MIA2" evidence="1">
    <location>
        <begin position="1238"/>
        <end position="1677"/>
    </location>
</feature>
<feature type="region of interest" description="Disordered" evidence="4">
    <location>
        <begin position="1447"/>
        <end position="1472"/>
    </location>
</feature>
<feature type="region of interest" description="Disordered" evidence="4">
    <location>
        <begin position="1669"/>
        <end position="1796"/>
    </location>
</feature>
<feature type="region of interest" description="Proline-rich domain (PRD); mediates interaction with the COPII coat subunits SEC23A and SEC23B" evidence="1">
    <location>
        <begin position="1776"/>
        <end position="1930"/>
    </location>
</feature>
<feature type="region of interest" description="Disordered" evidence="4">
    <location>
        <begin position="1801"/>
        <end position="1820"/>
    </location>
</feature>
<feature type="region of interest" description="SEC16A-interacting region (SIR); required for its localization to endoplasmic reticulum exit sites and for its interaction with SEC16A" evidence="1">
    <location>
        <begin position="1809"/>
        <end position="1869"/>
    </location>
</feature>
<feature type="region of interest" description="Disordered" evidence="4">
    <location>
        <begin position="1840"/>
        <end position="1930"/>
    </location>
</feature>
<feature type="coiled-coil region" evidence="2">
    <location>
        <begin position="1236"/>
        <end position="1329"/>
    </location>
</feature>
<feature type="coiled-coil region" evidence="2">
    <location>
        <begin position="1359"/>
        <end position="1422"/>
    </location>
</feature>
<feature type="coiled-coil region" evidence="2">
    <location>
        <begin position="1514"/>
        <end position="1662"/>
    </location>
</feature>
<feature type="compositionally biased region" description="Basic and acidic residues" evidence="4">
    <location>
        <begin position="152"/>
        <end position="189"/>
    </location>
</feature>
<feature type="compositionally biased region" description="Polar residues" evidence="4">
    <location>
        <begin position="197"/>
        <end position="211"/>
    </location>
</feature>
<feature type="compositionally biased region" description="Polar residues" evidence="4">
    <location>
        <begin position="247"/>
        <end position="256"/>
    </location>
</feature>
<feature type="compositionally biased region" description="Acidic residues" evidence="4">
    <location>
        <begin position="317"/>
        <end position="330"/>
    </location>
</feature>
<feature type="compositionally biased region" description="Basic and acidic residues" evidence="4">
    <location>
        <begin position="338"/>
        <end position="368"/>
    </location>
</feature>
<feature type="compositionally biased region" description="Acidic residues" evidence="4">
    <location>
        <begin position="420"/>
        <end position="430"/>
    </location>
</feature>
<feature type="compositionally biased region" description="Basic and acidic residues" evidence="4">
    <location>
        <begin position="431"/>
        <end position="442"/>
    </location>
</feature>
<feature type="compositionally biased region" description="Basic and acidic residues" evidence="4">
    <location>
        <begin position="451"/>
        <end position="461"/>
    </location>
</feature>
<feature type="compositionally biased region" description="Basic and acidic residues" evidence="4">
    <location>
        <begin position="661"/>
        <end position="677"/>
    </location>
</feature>
<feature type="compositionally biased region" description="Acidic residues" evidence="4">
    <location>
        <begin position="692"/>
        <end position="701"/>
    </location>
</feature>
<feature type="compositionally biased region" description="Polar residues" evidence="4">
    <location>
        <begin position="715"/>
        <end position="726"/>
    </location>
</feature>
<feature type="compositionally biased region" description="Basic and acidic residues" evidence="4">
    <location>
        <begin position="791"/>
        <end position="800"/>
    </location>
</feature>
<feature type="compositionally biased region" description="Basic and acidic residues" evidence="4">
    <location>
        <begin position="1030"/>
        <end position="1039"/>
    </location>
</feature>
<feature type="compositionally biased region" description="Polar residues" evidence="4">
    <location>
        <begin position="1040"/>
        <end position="1054"/>
    </location>
</feature>
<feature type="compositionally biased region" description="Polar residues" evidence="4">
    <location>
        <begin position="1115"/>
        <end position="1127"/>
    </location>
</feature>
<feature type="compositionally biased region" description="Basic and acidic residues" evidence="4">
    <location>
        <begin position="1128"/>
        <end position="1137"/>
    </location>
</feature>
<feature type="compositionally biased region" description="Polar residues" evidence="4">
    <location>
        <begin position="1677"/>
        <end position="1694"/>
    </location>
</feature>
<feature type="compositionally biased region" description="Pro residues" evidence="4">
    <location>
        <begin position="1706"/>
        <end position="1715"/>
    </location>
</feature>
<feature type="compositionally biased region" description="Basic and acidic residues" evidence="4">
    <location>
        <begin position="1722"/>
        <end position="1738"/>
    </location>
</feature>
<feature type="compositionally biased region" description="Low complexity" evidence="4">
    <location>
        <begin position="1760"/>
        <end position="1773"/>
    </location>
</feature>
<feature type="compositionally biased region" description="Pro residues" evidence="4">
    <location>
        <begin position="1801"/>
        <end position="1811"/>
    </location>
</feature>
<feature type="compositionally biased region" description="Basic and acidic residues" evidence="4">
    <location>
        <begin position="1846"/>
        <end position="1858"/>
    </location>
</feature>
<feature type="compositionally biased region" description="Pro residues" evidence="4">
    <location>
        <begin position="1881"/>
        <end position="1898"/>
    </location>
</feature>
<feature type="compositionally biased region" description="Polar residues" evidence="4">
    <location>
        <begin position="1915"/>
        <end position="1930"/>
    </location>
</feature>
<feature type="modified residue" description="Phosphoserine" evidence="1">
    <location>
        <position position="229"/>
    </location>
</feature>
<feature type="modified residue" description="Phosphoserine" evidence="1">
    <location>
        <position position="856"/>
    </location>
</feature>
<feature type="modified residue" description="Phosphoserine" evidence="14">
    <location>
        <position position="1458"/>
    </location>
</feature>
<feature type="modified residue" description="Phosphoserine" evidence="14">
    <location>
        <position position="1693"/>
    </location>
</feature>
<feature type="modified residue" description="Phosphoserine" evidence="14">
    <location>
        <position position="1705"/>
    </location>
</feature>
<feature type="modified residue" description="Phosphoserine" evidence="1">
    <location>
        <position position="1733"/>
    </location>
</feature>
<feature type="modified residue" description="Phosphoserine" evidence="11 14">
    <location>
        <position position="1754"/>
    </location>
</feature>
<feature type="modified residue" description="Phosphoserine" evidence="13 14">
    <location>
        <position position="1766"/>
    </location>
</feature>
<feature type="modified residue" description="Phosphoserine" evidence="1">
    <location>
        <position position="1770"/>
    </location>
</feature>
<feature type="modified residue" description="Asymmetric dimethylarginine" evidence="15">
    <location>
        <position position="1805"/>
    </location>
</feature>
<feature type="modified residue" description="Phosphoserine" evidence="11 12">
    <location>
        <position position="1915"/>
    </location>
</feature>
<feature type="glycosylation site" description="N-linked (GlcNAc...) asparagine" evidence="2">
    <location>
        <position position="360"/>
    </location>
</feature>
<feature type="glycosylation site" description="N-linked (GlcNAc...) asparagine" evidence="2">
    <location>
        <position position="631"/>
    </location>
</feature>
<feature type="splice variant" id="VSP_025865" description="In isoform 3." evidence="7">
    <location>
        <begin position="1"/>
        <end position="1149"/>
    </location>
</feature>
<feature type="splice variant" id="VSP_025866" description="In isoform 3." evidence="7">
    <original>GDVQKQLETIAEEPAAVPPLESAFGSLYAFILYLSKM</original>
    <variation>MDSLPATVPAVTASPGDPELLGPLSVLYAALIAKLLE</variation>
    <location>
        <begin position="1150"/>
        <end position="1186"/>
    </location>
</feature>
<feature type="splice variant" id="VSP_025867" description="In isoform 2." evidence="7">
    <original>KSRVYQVT</original>
    <variation>SKLNYLIT</variation>
    <location>
        <begin position="1232"/>
        <end position="1239"/>
    </location>
</feature>
<feature type="splice variant" id="VSP_025868" description="In isoform 2." evidence="7">
    <location>
        <begin position="1240"/>
        <end position="1930"/>
    </location>
</feature>
<organism>
    <name type="scientific">Mus musculus</name>
    <name type="common">Mouse</name>
    <dbReference type="NCBI Taxonomy" id="10090"/>
    <lineage>
        <taxon>Eukaryota</taxon>
        <taxon>Metazoa</taxon>
        <taxon>Chordata</taxon>
        <taxon>Craniata</taxon>
        <taxon>Vertebrata</taxon>
        <taxon>Euteleostomi</taxon>
        <taxon>Mammalia</taxon>
        <taxon>Eutheria</taxon>
        <taxon>Euarchontoglires</taxon>
        <taxon>Glires</taxon>
        <taxon>Rodentia</taxon>
        <taxon>Myomorpha</taxon>
        <taxon>Muroidea</taxon>
        <taxon>Muridae</taxon>
        <taxon>Murinae</taxon>
        <taxon>Mus</taxon>
        <taxon>Mus</taxon>
    </lineage>
</organism>
<accession>Q8BI84</accession>
<accession>A0JLX8</accession>
<accession>Q3UFI9</accession>
<accession>Q571D7</accession>
<accession>Q8BJE9</accession>
<accession>Q8BL31</accession>
<accession>Q8C5B9</accession>
<evidence type="ECO:0000250" key="1">
    <source>
        <dbReference type="UniProtKB" id="Q5JRA6"/>
    </source>
</evidence>
<evidence type="ECO:0000255" key="2"/>
<evidence type="ECO:0000255" key="3">
    <source>
        <dbReference type="PROSITE-ProRule" id="PRU00192"/>
    </source>
</evidence>
<evidence type="ECO:0000256" key="4">
    <source>
        <dbReference type="SAM" id="MobiDB-lite"/>
    </source>
</evidence>
<evidence type="ECO:0000269" key="5">
    <source>
    </source>
</evidence>
<evidence type="ECO:0000303" key="6">
    <source>
    </source>
</evidence>
<evidence type="ECO:0000303" key="7">
    <source>
    </source>
</evidence>
<evidence type="ECO:0000305" key="8"/>
<evidence type="ECO:0000312" key="9">
    <source>
        <dbReference type="EMBL" id="BAD90177.1"/>
    </source>
</evidence>
<evidence type="ECO:0000312" key="10">
    <source>
        <dbReference type="MGI" id="MGI:2443183"/>
    </source>
</evidence>
<evidence type="ECO:0007744" key="11">
    <source>
    </source>
</evidence>
<evidence type="ECO:0007744" key="12">
    <source>
    </source>
</evidence>
<evidence type="ECO:0007744" key="13">
    <source>
    </source>
</evidence>
<evidence type="ECO:0007744" key="14">
    <source>
    </source>
</evidence>
<evidence type="ECO:0007744" key="15">
    <source>
    </source>
</evidence>
<sequence length="1930" mass="213675">MAAAPGLLFWLFVLGALWWVPGQSDLSHGRRFSDLKVCGDEECSMLMYRGKALEDFTGPDCRFVNFKKGDDVYVYYKLAGGSLELWAGSVEHSFGYFPKDLIKVLHKYTEEELHIPADETDFVCFEGGRDDFNSYNVEELLGSLELEDSVPEESKKAEEVSQHREKSPEESRGRELDPVPEPEAFRADSEDGEGAFSESTEGLQGQPSAQESHPHTSGPAANAQGVQSSLDTFEEILHDKLKVPGSESRTGNSSPASVEREKTDAYKVLKTEMSLDLKTKFGSTADALVSDDEATRLVTSLEDGFDEALDAEYYPMEEEEEVEEDADSSDELPLLTFSDKDEKVPGKPMIEKYLTDKDPNLSEEDKVEPPTWGDAFFSIVTGGEGKPGVVDLERSIEEEEDVSVSSSHQRKPQPAAGYTDSEDEGDDLFVEEPKTNDVKDSETDPELVITGEEKDIQESRKGLVQPESQSEDAKSETASAYRLQGSKLNPLSAAEKGRDFTLKAVFEKKENGLKESVIHISKETLHEDKTREIQRDSLESELVHRALGSSVTENNKPKSLGVAPLLGNNKPDASKDSTEVPDGSVSGPKAGQQEGFLEPGLKTQHQPRFSPPEETGPSRELGGKVPISGRNLSWQQEQDVAAVVGKHANEKTGFPEEESREDGTDAEQARAIRRPQEAESPEVLSVQPGRPDEEEEEEEGDNYPPEGLMEDENAVSAQQSRENSPSARDGRSDMNSQVFEKVILGTLNLNTEKTKQPANMILETGQESETTSEEAGDVGKESGHSVVVDSEESHLADMRAQRPSQVHGLRDETAAQTPGSGEAVLSKNPNDLQKDNPEEELVNTLGLEDPGVGEISEGEPEDTKEFGVSESQGTDAEDLRDDPSRQATPEIPDIVLKSIREDLPIINSFFKDDQQSLHRFLKYFDVRELEGLLEDMSIRLRSAHQNSLPYNMEKVLDKVFRASESRILSMAEKMLDTGVAKNRDLGSKESSPLEEAEVLDDIQDLIYFVRYQYSGVETAPLVTPPPPEEGWARPGEERQPPQQDSLPQENTGDLSVQPPEEPELSDQPVTSVQPPEEPELSDQPVTSVQPPEEPELSDQPVTSVQPPEEPELSDQPVTGYTSTSEVSQKPDTKKDIDLGPVMEGGPVGAGDVQKQLETIAEEPAAVPPLESAFGSLYAFILYLSKMLLATLPDNVQPGPDFYGLPWQPVIITAVLGIVSFAIFSWRTILVVKSRVYQVTEKQISEKLENIKKENAELMQKLSSYEQKIKESKKYVQETKKQNMILSDEAVKYKDKIKILEETNVSLGDKAKSLRLQLESEREQNVKNQDLILENKKSIEKLKDVISMNASELSEVQVALNEAKLSEENVKSECHRVQEENARLKKKKEQLQQQVEEWSKSHAELTGQIKSFEKSQEDLEIALTHKDDNISALTNCITQLNRLECELESEDPDKGGNESDDLANGETGGDRSEKIRNRIKQMMDVSRTQTAVSIVEEDLKLLQLKLRASMSTKCNLEDQIKKLEDDRSSLQTAKAGLEDECKTLRQKVEILNELYQQKEMALQKKLSQEEYERQDREQRLTAADEKVVLAAEEVKTYKRRIEEMEEELQKTERSFKNQIAAHEKKAHDNWLKARAAERAMAEEKREAANLRHKLLEMTQKMAMRQDEPVIVKPMPGRPNTQNPPRRGLLSQNGSFGPSPVSGGECSPPLPAEPPGRPLSATLSRRDTPRSEFGSLDRHLPRPRWPSEASGKHSASDPGPAPVVNSSSRSSSPAKAVDEGKVNMAPKGPPPFPGVPLMGGPVPPPIRYGPPPQLCGGPFGPRPLPPPFVPGMHPPLGVREYAPGVLPGKRDLPLDPREFLPGHTPFRPPGSLGPREFFIPGTRLPPPTHGPQEYPPPPPAVRDSLPSGPREEAKPASPSSVQDRSQASKPTP</sequence>
<name>TGO1_MOUSE</name>
<gene>
    <name evidence="10" type="primary">Mia3</name>
    <name evidence="9" type="synonym">Kiaa0268</name>
    <name evidence="6" type="synonym">Tango</name>
</gene>
<proteinExistence type="evidence at protein level"/>